<accession>A7MZA1</accession>
<comment type="similarity">
    <text evidence="1">Belongs to the UPF0149 family.</text>
</comment>
<protein>
    <recommendedName>
        <fullName evidence="1">UPF0149 protein VIBHAR_03551</fullName>
    </recommendedName>
</protein>
<organism>
    <name type="scientific">Vibrio campbellii (strain ATCC BAA-1116)</name>
    <dbReference type="NCBI Taxonomy" id="2902295"/>
    <lineage>
        <taxon>Bacteria</taxon>
        <taxon>Pseudomonadati</taxon>
        <taxon>Pseudomonadota</taxon>
        <taxon>Gammaproteobacteria</taxon>
        <taxon>Vibrionales</taxon>
        <taxon>Vibrionaceae</taxon>
        <taxon>Vibrio</taxon>
    </lineage>
</organism>
<gene>
    <name type="ordered locus">VIBHAR_03551</name>
</gene>
<evidence type="ECO:0000255" key="1">
    <source>
        <dbReference type="HAMAP-Rule" id="MF_00346"/>
    </source>
</evidence>
<feature type="chain" id="PRO_1000013050" description="UPF0149 protein VIBHAR_03551">
    <location>
        <begin position="1"/>
        <end position="192"/>
    </location>
</feature>
<name>Y3551_VIBC1</name>
<reference key="1">
    <citation type="submission" date="2007-08" db="EMBL/GenBank/DDBJ databases">
        <authorList>
            <consortium name="The Vibrio harveyi Genome Sequencing Project"/>
            <person name="Bassler B."/>
            <person name="Clifton S.W."/>
            <person name="Fulton L."/>
            <person name="Delehaunty K."/>
            <person name="Fronick C."/>
            <person name="Harrison M."/>
            <person name="Markivic C."/>
            <person name="Fulton R."/>
            <person name="Tin-Wollam A.-M."/>
            <person name="Shah N."/>
            <person name="Pepin K."/>
            <person name="Nash W."/>
            <person name="Thiruvilangam P."/>
            <person name="Bhonagiri V."/>
            <person name="Waters C."/>
            <person name="Tu K.C."/>
            <person name="Irgon J."/>
            <person name="Wilson R.K."/>
        </authorList>
    </citation>
    <scope>NUCLEOTIDE SEQUENCE [LARGE SCALE GENOMIC DNA]</scope>
    <source>
        <strain>ATCC BAA-1116 / BB120</strain>
    </source>
</reference>
<dbReference type="EMBL" id="CP000789">
    <property type="protein sequence ID" value="ABU72487.1"/>
    <property type="molecule type" value="Genomic_DNA"/>
</dbReference>
<dbReference type="RefSeq" id="WP_012128928.1">
    <property type="nucleotide sequence ID" value="NC_009783.1"/>
</dbReference>
<dbReference type="SMR" id="A7MZA1"/>
<dbReference type="KEGG" id="vha:VIBHAR_03551"/>
<dbReference type="PATRIC" id="fig|338187.25.peg.2659"/>
<dbReference type="Proteomes" id="UP000008152">
    <property type="component" value="Chromosome I"/>
</dbReference>
<dbReference type="GO" id="GO:0005829">
    <property type="term" value="C:cytosol"/>
    <property type="evidence" value="ECO:0007669"/>
    <property type="project" value="TreeGrafter"/>
</dbReference>
<dbReference type="Gene3D" id="1.20.120.740">
    <property type="entry name" value="YgfB uncharacterised protein family UPF0149, PF03695"/>
    <property type="match status" value="1"/>
</dbReference>
<dbReference type="HAMAP" id="MF_00346">
    <property type="entry name" value="UPF0149"/>
    <property type="match status" value="1"/>
</dbReference>
<dbReference type="InterPro" id="IPR011978">
    <property type="entry name" value="YgfB-like"/>
</dbReference>
<dbReference type="InterPro" id="IPR036255">
    <property type="entry name" value="YgfB-like_sf"/>
</dbReference>
<dbReference type="NCBIfam" id="NF002477">
    <property type="entry name" value="PRK01736.1"/>
    <property type="match status" value="1"/>
</dbReference>
<dbReference type="PANTHER" id="PTHR37528">
    <property type="entry name" value="UPF0149 PROTEIN YGFB"/>
    <property type="match status" value="1"/>
</dbReference>
<dbReference type="PANTHER" id="PTHR37528:SF1">
    <property type="entry name" value="UPF0149 PROTEIN YGFB"/>
    <property type="match status" value="1"/>
</dbReference>
<dbReference type="Pfam" id="PF03695">
    <property type="entry name" value="UPF0149"/>
    <property type="match status" value="1"/>
</dbReference>
<dbReference type="SUPFAM" id="SSF101327">
    <property type="entry name" value="YgfB-like"/>
    <property type="match status" value="1"/>
</dbReference>
<proteinExistence type="inferred from homology"/>
<sequence>MSEITLPEYQSIAAELKSASLAVTPAELHGLLVGMLSGGLAINDQTWQPILFDYTNEGMGWPSSALGLAQSVFQVTVNELTGTSMELSLLLPDEAGEEGLFALADGVSDFVNHFISGMGLAGIAIYKASDDAKEALTDLEEIAKLGIDEDDDLGEQALLLEQVIEHVKACVLTIHAEFGARPESNENKPTIH</sequence>